<name>DER_BURP0</name>
<comment type="function">
    <text evidence="1">GTPase that plays an essential role in the late steps of ribosome biogenesis.</text>
</comment>
<comment type="subunit">
    <text evidence="1">Associates with the 50S ribosomal subunit.</text>
</comment>
<comment type="similarity">
    <text evidence="1">Belongs to the TRAFAC class TrmE-Era-EngA-EngB-Septin-like GTPase superfamily. EngA (Der) GTPase family.</text>
</comment>
<protein>
    <recommendedName>
        <fullName evidence="1">GTPase Der</fullName>
    </recommendedName>
    <alternativeName>
        <fullName evidence="1">GTP-binding protein EngA</fullName>
    </alternativeName>
</protein>
<feature type="chain" id="PRO_1000011583" description="GTPase Der">
    <location>
        <begin position="1"/>
        <end position="445"/>
    </location>
</feature>
<feature type="domain" description="EngA-type G 1">
    <location>
        <begin position="3"/>
        <end position="167"/>
    </location>
</feature>
<feature type="domain" description="EngA-type G 2">
    <location>
        <begin position="180"/>
        <end position="353"/>
    </location>
</feature>
<feature type="domain" description="KH-like" evidence="1">
    <location>
        <begin position="354"/>
        <end position="438"/>
    </location>
</feature>
<feature type="binding site" evidence="1">
    <location>
        <begin position="9"/>
        <end position="16"/>
    </location>
    <ligand>
        <name>GTP</name>
        <dbReference type="ChEBI" id="CHEBI:37565"/>
        <label>1</label>
    </ligand>
</feature>
<feature type="binding site" evidence="1">
    <location>
        <begin position="56"/>
        <end position="60"/>
    </location>
    <ligand>
        <name>GTP</name>
        <dbReference type="ChEBI" id="CHEBI:37565"/>
        <label>1</label>
    </ligand>
</feature>
<feature type="binding site" evidence="1">
    <location>
        <begin position="119"/>
        <end position="122"/>
    </location>
    <ligand>
        <name>GTP</name>
        <dbReference type="ChEBI" id="CHEBI:37565"/>
        <label>1</label>
    </ligand>
</feature>
<feature type="binding site" evidence="1">
    <location>
        <begin position="186"/>
        <end position="193"/>
    </location>
    <ligand>
        <name>GTP</name>
        <dbReference type="ChEBI" id="CHEBI:37565"/>
        <label>2</label>
    </ligand>
</feature>
<feature type="binding site" evidence="1">
    <location>
        <begin position="233"/>
        <end position="237"/>
    </location>
    <ligand>
        <name>GTP</name>
        <dbReference type="ChEBI" id="CHEBI:37565"/>
        <label>2</label>
    </ligand>
</feature>
<feature type="binding site" evidence="1">
    <location>
        <begin position="298"/>
        <end position="301"/>
    </location>
    <ligand>
        <name>GTP</name>
        <dbReference type="ChEBI" id="CHEBI:37565"/>
        <label>2</label>
    </ligand>
</feature>
<proteinExistence type="inferred from homology"/>
<evidence type="ECO:0000255" key="1">
    <source>
        <dbReference type="HAMAP-Rule" id="MF_00195"/>
    </source>
</evidence>
<dbReference type="EMBL" id="CP000572">
    <property type="protein sequence ID" value="ABN92016.1"/>
    <property type="molecule type" value="Genomic_DNA"/>
</dbReference>
<dbReference type="RefSeq" id="WP_004192452.1">
    <property type="nucleotide sequence ID" value="NC_009076.1"/>
</dbReference>
<dbReference type="SMR" id="A3NVW6"/>
<dbReference type="GeneID" id="93060472"/>
<dbReference type="KEGG" id="bpl:BURPS1106A_2223"/>
<dbReference type="HOGENOM" id="CLU_016077_6_2_4"/>
<dbReference type="Proteomes" id="UP000006738">
    <property type="component" value="Chromosome I"/>
</dbReference>
<dbReference type="GO" id="GO:0016887">
    <property type="term" value="F:ATP hydrolysis activity"/>
    <property type="evidence" value="ECO:0007669"/>
    <property type="project" value="InterPro"/>
</dbReference>
<dbReference type="GO" id="GO:0005525">
    <property type="term" value="F:GTP binding"/>
    <property type="evidence" value="ECO:0007669"/>
    <property type="project" value="UniProtKB-UniRule"/>
</dbReference>
<dbReference type="GO" id="GO:0043022">
    <property type="term" value="F:ribosome binding"/>
    <property type="evidence" value="ECO:0007669"/>
    <property type="project" value="TreeGrafter"/>
</dbReference>
<dbReference type="GO" id="GO:0042254">
    <property type="term" value="P:ribosome biogenesis"/>
    <property type="evidence" value="ECO:0007669"/>
    <property type="project" value="UniProtKB-KW"/>
</dbReference>
<dbReference type="CDD" id="cd01894">
    <property type="entry name" value="EngA1"/>
    <property type="match status" value="1"/>
</dbReference>
<dbReference type="CDD" id="cd01895">
    <property type="entry name" value="EngA2"/>
    <property type="match status" value="1"/>
</dbReference>
<dbReference type="FunFam" id="3.30.300.20:FF:000004">
    <property type="entry name" value="GTPase Der"/>
    <property type="match status" value="1"/>
</dbReference>
<dbReference type="FunFam" id="3.40.50.300:FF:000040">
    <property type="entry name" value="GTPase Der"/>
    <property type="match status" value="1"/>
</dbReference>
<dbReference type="FunFam" id="3.40.50.300:FF:000057">
    <property type="entry name" value="GTPase Der"/>
    <property type="match status" value="1"/>
</dbReference>
<dbReference type="Gene3D" id="3.30.300.20">
    <property type="match status" value="1"/>
</dbReference>
<dbReference type="Gene3D" id="3.40.50.300">
    <property type="entry name" value="P-loop containing nucleotide triphosphate hydrolases"/>
    <property type="match status" value="2"/>
</dbReference>
<dbReference type="HAMAP" id="MF_00195">
    <property type="entry name" value="GTPase_Der"/>
    <property type="match status" value="1"/>
</dbReference>
<dbReference type="InterPro" id="IPR003593">
    <property type="entry name" value="AAA+_ATPase"/>
</dbReference>
<dbReference type="InterPro" id="IPR031166">
    <property type="entry name" value="G_ENGA"/>
</dbReference>
<dbReference type="InterPro" id="IPR006073">
    <property type="entry name" value="GTP-bd"/>
</dbReference>
<dbReference type="InterPro" id="IPR016484">
    <property type="entry name" value="GTPase_Der"/>
</dbReference>
<dbReference type="InterPro" id="IPR032859">
    <property type="entry name" value="KH_dom-like"/>
</dbReference>
<dbReference type="InterPro" id="IPR015946">
    <property type="entry name" value="KH_dom-like_a/b"/>
</dbReference>
<dbReference type="InterPro" id="IPR027417">
    <property type="entry name" value="P-loop_NTPase"/>
</dbReference>
<dbReference type="InterPro" id="IPR005225">
    <property type="entry name" value="Small_GTP-bd"/>
</dbReference>
<dbReference type="NCBIfam" id="TIGR03594">
    <property type="entry name" value="GTPase_EngA"/>
    <property type="match status" value="1"/>
</dbReference>
<dbReference type="NCBIfam" id="TIGR00231">
    <property type="entry name" value="small_GTP"/>
    <property type="match status" value="2"/>
</dbReference>
<dbReference type="PANTHER" id="PTHR43834">
    <property type="entry name" value="GTPASE DER"/>
    <property type="match status" value="1"/>
</dbReference>
<dbReference type="PANTHER" id="PTHR43834:SF6">
    <property type="entry name" value="GTPASE DER"/>
    <property type="match status" value="1"/>
</dbReference>
<dbReference type="Pfam" id="PF14714">
    <property type="entry name" value="KH_dom-like"/>
    <property type="match status" value="1"/>
</dbReference>
<dbReference type="Pfam" id="PF01926">
    <property type="entry name" value="MMR_HSR1"/>
    <property type="match status" value="2"/>
</dbReference>
<dbReference type="PIRSF" id="PIRSF006485">
    <property type="entry name" value="GTP-binding_EngA"/>
    <property type="match status" value="1"/>
</dbReference>
<dbReference type="PRINTS" id="PR00326">
    <property type="entry name" value="GTP1OBG"/>
</dbReference>
<dbReference type="SMART" id="SM00382">
    <property type="entry name" value="AAA"/>
    <property type="match status" value="2"/>
</dbReference>
<dbReference type="SUPFAM" id="SSF52540">
    <property type="entry name" value="P-loop containing nucleoside triphosphate hydrolases"/>
    <property type="match status" value="2"/>
</dbReference>
<dbReference type="PROSITE" id="PS51712">
    <property type="entry name" value="G_ENGA"/>
    <property type="match status" value="2"/>
</dbReference>
<reference key="1">
    <citation type="journal article" date="2010" name="Genome Biol. Evol.">
        <title>Continuing evolution of Burkholderia mallei through genome reduction and large-scale rearrangements.</title>
        <authorList>
            <person name="Losada L."/>
            <person name="Ronning C.M."/>
            <person name="DeShazer D."/>
            <person name="Woods D."/>
            <person name="Fedorova N."/>
            <person name="Kim H.S."/>
            <person name="Shabalina S.A."/>
            <person name="Pearson T.R."/>
            <person name="Brinkac L."/>
            <person name="Tan P."/>
            <person name="Nandi T."/>
            <person name="Crabtree J."/>
            <person name="Badger J."/>
            <person name="Beckstrom-Sternberg S."/>
            <person name="Saqib M."/>
            <person name="Schutzer S.E."/>
            <person name="Keim P."/>
            <person name="Nierman W.C."/>
        </authorList>
    </citation>
    <scope>NUCLEOTIDE SEQUENCE [LARGE SCALE GENOMIC DNA]</scope>
    <source>
        <strain>1106a</strain>
    </source>
</reference>
<sequence>MKPVIALVGRPNVGKSTLFNRLTRSRDALVADLPGLTRDRHYGEGRVGARPYLVVDTGGFEPVAKDGILHEMARQTRQAVEEADVVVFIVDGRNGLAPQDKSIADYLRKTGRPIFLVVNKAEGMKYTAVASDFYELGLGDPRAISAAHGDGVNDMINEALEVAYAGEPQESEEAAAARGIKIAIVGRPNVGKSTLVNTLIGEDRVIAFDMPGTTRDSIYVDFERNGKHYTLIDTAGLRRRGKVFEAIEKFSVVKTLQSISDANVVILLLDARQDISDQDAHIAGFVVEQGRALVVGVNKWDGLDPHVRERTKADLARKLKFLEFAKFHFISAAEKTGIGALMRSVDDAYAAAMKKLPTPKLTRALIEAVEFQQPRRRGPVRPKLRYAHQGGQNPPIIVIHGNALDAVTETYKRYLENRFRETFSLTGTPLRIEFRSSTNPYADKD</sequence>
<organism>
    <name type="scientific">Burkholderia pseudomallei (strain 1106a)</name>
    <dbReference type="NCBI Taxonomy" id="357348"/>
    <lineage>
        <taxon>Bacteria</taxon>
        <taxon>Pseudomonadati</taxon>
        <taxon>Pseudomonadota</taxon>
        <taxon>Betaproteobacteria</taxon>
        <taxon>Burkholderiales</taxon>
        <taxon>Burkholderiaceae</taxon>
        <taxon>Burkholderia</taxon>
        <taxon>pseudomallei group</taxon>
    </lineage>
</organism>
<gene>
    <name evidence="1" type="primary">der</name>
    <name type="synonym">engA</name>
    <name type="ordered locus">BURPS1106A_2223</name>
</gene>
<accession>A3NVW6</accession>
<keyword id="KW-0342">GTP-binding</keyword>
<keyword id="KW-0547">Nucleotide-binding</keyword>
<keyword id="KW-0677">Repeat</keyword>
<keyword id="KW-0690">Ribosome biogenesis</keyword>